<organism>
    <name type="scientific">Agrobacterium fabrum (strain C58 / ATCC 33970)</name>
    <name type="common">Agrobacterium tumefaciens (strain C58)</name>
    <dbReference type="NCBI Taxonomy" id="176299"/>
    <lineage>
        <taxon>Bacteria</taxon>
        <taxon>Pseudomonadati</taxon>
        <taxon>Pseudomonadota</taxon>
        <taxon>Alphaproteobacteria</taxon>
        <taxon>Hyphomicrobiales</taxon>
        <taxon>Rhizobiaceae</taxon>
        <taxon>Rhizobium/Agrobacterium group</taxon>
        <taxon>Agrobacterium</taxon>
        <taxon>Agrobacterium tumefaciens complex</taxon>
    </lineage>
</organism>
<gene>
    <name evidence="1" type="primary">glmM</name>
    <name type="ordered locus">Atu3709</name>
    <name type="ORF">AGR_L_2256</name>
</gene>
<dbReference type="EC" id="5.4.2.10" evidence="1"/>
<dbReference type="EMBL" id="AE007870">
    <property type="protein sequence ID" value="AAK89696.2"/>
    <property type="molecule type" value="Genomic_DNA"/>
</dbReference>
<dbReference type="PIR" id="AI3012">
    <property type="entry name" value="AI3012"/>
</dbReference>
<dbReference type="PIR" id="F98271">
    <property type="entry name" value="F98271"/>
</dbReference>
<dbReference type="RefSeq" id="NP_356911.2">
    <property type="nucleotide sequence ID" value="NC_003063.2"/>
</dbReference>
<dbReference type="RefSeq" id="WP_010973270.1">
    <property type="nucleotide sequence ID" value="NC_003063.2"/>
</dbReference>
<dbReference type="SMR" id="Q8U9L9"/>
<dbReference type="STRING" id="176299.Atu3709"/>
<dbReference type="EnsemblBacteria" id="AAK89696">
    <property type="protein sequence ID" value="AAK89696"/>
    <property type="gene ID" value="Atu3709"/>
</dbReference>
<dbReference type="GeneID" id="1135583"/>
<dbReference type="KEGG" id="atu:Atu3709"/>
<dbReference type="PATRIC" id="fig|176299.10.peg.3541"/>
<dbReference type="eggNOG" id="COG1109">
    <property type="taxonomic scope" value="Bacteria"/>
</dbReference>
<dbReference type="HOGENOM" id="CLU_016950_7_0_5"/>
<dbReference type="OrthoDB" id="9803322at2"/>
<dbReference type="PhylomeDB" id="Q8U9L9"/>
<dbReference type="Proteomes" id="UP000000813">
    <property type="component" value="Chromosome linear"/>
</dbReference>
<dbReference type="GO" id="GO:0005829">
    <property type="term" value="C:cytosol"/>
    <property type="evidence" value="ECO:0007669"/>
    <property type="project" value="TreeGrafter"/>
</dbReference>
<dbReference type="GO" id="GO:0000287">
    <property type="term" value="F:magnesium ion binding"/>
    <property type="evidence" value="ECO:0007669"/>
    <property type="project" value="UniProtKB-UniRule"/>
</dbReference>
<dbReference type="GO" id="GO:0008966">
    <property type="term" value="F:phosphoglucosamine mutase activity"/>
    <property type="evidence" value="ECO:0007669"/>
    <property type="project" value="UniProtKB-UniRule"/>
</dbReference>
<dbReference type="GO" id="GO:0004615">
    <property type="term" value="F:phosphomannomutase activity"/>
    <property type="evidence" value="ECO:0007669"/>
    <property type="project" value="TreeGrafter"/>
</dbReference>
<dbReference type="GO" id="GO:0005975">
    <property type="term" value="P:carbohydrate metabolic process"/>
    <property type="evidence" value="ECO:0007669"/>
    <property type="project" value="InterPro"/>
</dbReference>
<dbReference type="GO" id="GO:0009252">
    <property type="term" value="P:peptidoglycan biosynthetic process"/>
    <property type="evidence" value="ECO:0007669"/>
    <property type="project" value="TreeGrafter"/>
</dbReference>
<dbReference type="GO" id="GO:0006048">
    <property type="term" value="P:UDP-N-acetylglucosamine biosynthetic process"/>
    <property type="evidence" value="ECO:0007669"/>
    <property type="project" value="TreeGrafter"/>
</dbReference>
<dbReference type="CDD" id="cd05802">
    <property type="entry name" value="GlmM"/>
    <property type="match status" value="1"/>
</dbReference>
<dbReference type="FunFam" id="3.30.310.50:FF:000001">
    <property type="entry name" value="Phosphoglucosamine mutase"/>
    <property type="match status" value="1"/>
</dbReference>
<dbReference type="FunFam" id="3.40.120.10:FF:000001">
    <property type="entry name" value="Phosphoglucosamine mutase"/>
    <property type="match status" value="1"/>
</dbReference>
<dbReference type="FunFam" id="3.40.120.10:FF:000003">
    <property type="entry name" value="Phosphoglucosamine mutase"/>
    <property type="match status" value="1"/>
</dbReference>
<dbReference type="Gene3D" id="3.40.120.10">
    <property type="entry name" value="Alpha-D-Glucose-1,6-Bisphosphate, subunit A, domain 3"/>
    <property type="match status" value="3"/>
</dbReference>
<dbReference type="Gene3D" id="3.30.310.50">
    <property type="entry name" value="Alpha-D-phosphohexomutase, C-terminal domain"/>
    <property type="match status" value="1"/>
</dbReference>
<dbReference type="HAMAP" id="MF_01554_B">
    <property type="entry name" value="GlmM_B"/>
    <property type="match status" value="1"/>
</dbReference>
<dbReference type="InterPro" id="IPR005844">
    <property type="entry name" value="A-D-PHexomutase_a/b/a-I"/>
</dbReference>
<dbReference type="InterPro" id="IPR016055">
    <property type="entry name" value="A-D-PHexomutase_a/b/a-I/II/III"/>
</dbReference>
<dbReference type="InterPro" id="IPR005845">
    <property type="entry name" value="A-D-PHexomutase_a/b/a-II"/>
</dbReference>
<dbReference type="InterPro" id="IPR005846">
    <property type="entry name" value="A-D-PHexomutase_a/b/a-III"/>
</dbReference>
<dbReference type="InterPro" id="IPR005843">
    <property type="entry name" value="A-D-PHexomutase_C"/>
</dbReference>
<dbReference type="InterPro" id="IPR036900">
    <property type="entry name" value="A-D-PHexomutase_C_sf"/>
</dbReference>
<dbReference type="InterPro" id="IPR016066">
    <property type="entry name" value="A-D-PHexomutase_CS"/>
</dbReference>
<dbReference type="InterPro" id="IPR005841">
    <property type="entry name" value="Alpha-D-phosphohexomutase_SF"/>
</dbReference>
<dbReference type="InterPro" id="IPR006352">
    <property type="entry name" value="GlmM_bact"/>
</dbReference>
<dbReference type="InterPro" id="IPR050060">
    <property type="entry name" value="Phosphoglucosamine_mutase"/>
</dbReference>
<dbReference type="NCBIfam" id="TIGR01455">
    <property type="entry name" value="glmM"/>
    <property type="match status" value="1"/>
</dbReference>
<dbReference type="NCBIfam" id="NF008139">
    <property type="entry name" value="PRK10887.1"/>
    <property type="match status" value="1"/>
</dbReference>
<dbReference type="PANTHER" id="PTHR42946:SF1">
    <property type="entry name" value="PHOSPHOGLUCOMUTASE (ALPHA-D-GLUCOSE-1,6-BISPHOSPHATE-DEPENDENT)"/>
    <property type="match status" value="1"/>
</dbReference>
<dbReference type="PANTHER" id="PTHR42946">
    <property type="entry name" value="PHOSPHOHEXOSE MUTASE"/>
    <property type="match status" value="1"/>
</dbReference>
<dbReference type="Pfam" id="PF02878">
    <property type="entry name" value="PGM_PMM_I"/>
    <property type="match status" value="1"/>
</dbReference>
<dbReference type="Pfam" id="PF02879">
    <property type="entry name" value="PGM_PMM_II"/>
    <property type="match status" value="1"/>
</dbReference>
<dbReference type="Pfam" id="PF02880">
    <property type="entry name" value="PGM_PMM_III"/>
    <property type="match status" value="1"/>
</dbReference>
<dbReference type="Pfam" id="PF00408">
    <property type="entry name" value="PGM_PMM_IV"/>
    <property type="match status" value="1"/>
</dbReference>
<dbReference type="PRINTS" id="PR00509">
    <property type="entry name" value="PGMPMM"/>
</dbReference>
<dbReference type="SUPFAM" id="SSF55957">
    <property type="entry name" value="Phosphoglucomutase, C-terminal domain"/>
    <property type="match status" value="1"/>
</dbReference>
<dbReference type="SUPFAM" id="SSF53738">
    <property type="entry name" value="Phosphoglucomutase, first 3 domains"/>
    <property type="match status" value="3"/>
</dbReference>
<dbReference type="PROSITE" id="PS00710">
    <property type="entry name" value="PGM_PMM"/>
    <property type="match status" value="1"/>
</dbReference>
<proteinExistence type="inferred from homology"/>
<reference key="1">
    <citation type="journal article" date="2001" name="Science">
        <title>The genome of the natural genetic engineer Agrobacterium tumefaciens C58.</title>
        <authorList>
            <person name="Wood D.W."/>
            <person name="Setubal J.C."/>
            <person name="Kaul R."/>
            <person name="Monks D.E."/>
            <person name="Kitajima J.P."/>
            <person name="Okura V.K."/>
            <person name="Zhou Y."/>
            <person name="Chen L."/>
            <person name="Wood G.E."/>
            <person name="Almeida N.F. Jr."/>
            <person name="Woo L."/>
            <person name="Chen Y."/>
            <person name="Paulsen I.T."/>
            <person name="Eisen J.A."/>
            <person name="Karp P.D."/>
            <person name="Bovee D. Sr."/>
            <person name="Chapman P."/>
            <person name="Clendenning J."/>
            <person name="Deatherage G."/>
            <person name="Gillet W."/>
            <person name="Grant C."/>
            <person name="Kutyavin T."/>
            <person name="Levy R."/>
            <person name="Li M.-J."/>
            <person name="McClelland E."/>
            <person name="Palmieri A."/>
            <person name="Raymond C."/>
            <person name="Rouse G."/>
            <person name="Saenphimmachak C."/>
            <person name="Wu Z."/>
            <person name="Romero P."/>
            <person name="Gordon D."/>
            <person name="Zhang S."/>
            <person name="Yoo H."/>
            <person name="Tao Y."/>
            <person name="Biddle P."/>
            <person name="Jung M."/>
            <person name="Krespan W."/>
            <person name="Perry M."/>
            <person name="Gordon-Kamm B."/>
            <person name="Liao L."/>
            <person name="Kim S."/>
            <person name="Hendrick C."/>
            <person name="Zhao Z.-Y."/>
            <person name="Dolan M."/>
            <person name="Chumley F."/>
            <person name="Tingey S.V."/>
            <person name="Tomb J.-F."/>
            <person name="Gordon M.P."/>
            <person name="Olson M.V."/>
            <person name="Nester E.W."/>
        </authorList>
    </citation>
    <scope>NUCLEOTIDE SEQUENCE [LARGE SCALE GENOMIC DNA]</scope>
    <source>
        <strain>C58 / ATCC 33970</strain>
    </source>
</reference>
<reference key="2">
    <citation type="journal article" date="2001" name="Science">
        <title>Genome sequence of the plant pathogen and biotechnology agent Agrobacterium tumefaciens C58.</title>
        <authorList>
            <person name="Goodner B."/>
            <person name="Hinkle G."/>
            <person name="Gattung S."/>
            <person name="Miller N."/>
            <person name="Blanchard M."/>
            <person name="Qurollo B."/>
            <person name="Goldman B.S."/>
            <person name="Cao Y."/>
            <person name="Askenazi M."/>
            <person name="Halling C."/>
            <person name="Mullin L."/>
            <person name="Houmiel K."/>
            <person name="Gordon J."/>
            <person name="Vaudin M."/>
            <person name="Iartchouk O."/>
            <person name="Epp A."/>
            <person name="Liu F."/>
            <person name="Wollam C."/>
            <person name="Allinger M."/>
            <person name="Doughty D."/>
            <person name="Scott C."/>
            <person name="Lappas C."/>
            <person name="Markelz B."/>
            <person name="Flanagan C."/>
            <person name="Crowell C."/>
            <person name="Gurson J."/>
            <person name="Lomo C."/>
            <person name="Sear C."/>
            <person name="Strub G."/>
            <person name="Cielo C."/>
            <person name="Slater S."/>
        </authorList>
    </citation>
    <scope>NUCLEOTIDE SEQUENCE [LARGE SCALE GENOMIC DNA]</scope>
    <source>
        <strain>C58 / ATCC 33970</strain>
    </source>
</reference>
<sequence>MARRYFGTDGIRGQSNVFPMTPDLAMRVGIAVGTIFRRGHHRHRVVIGKDTRLSGYMLENALVAGFTAAGLDVFLLGPIPTPAVAMLTRSLRADIGVMISASHNPFSDNGIKLFGPDGYKLSDELELEIEDLLDKDIYAQLAKPAEIGRAKRVDGDIYRYIEFVKRTLPRDVTLSGLRIAIDCANGAAYKVAPAALWELGAEVVTIGNEPNGININLECGSTHPEALQKKLHEVRADIGIALDGDADRVIIVDERGEIVDGDQLMAVIADSWAADNTLRGGGIVATVMSNLGLERFLGDKGLTLARTKVGDRYVVEHMRNHNFNVGGEQSGHIVLSDYGTTGDGLVAALQVLAKVKRSGLTVSEVCRKFEPVPQLLKNVRISGGKPLENPIVLQAIADAESALANNGRLVIRPSGTEPLIRVMAEGDDSAKVEKIVNDLVGVISSARSAA</sequence>
<comment type="function">
    <text evidence="1">Catalyzes the conversion of glucosamine-6-phosphate to glucosamine-1-phosphate.</text>
</comment>
<comment type="catalytic activity">
    <reaction evidence="1">
        <text>alpha-D-glucosamine 1-phosphate = D-glucosamine 6-phosphate</text>
        <dbReference type="Rhea" id="RHEA:23424"/>
        <dbReference type="ChEBI" id="CHEBI:58516"/>
        <dbReference type="ChEBI" id="CHEBI:58725"/>
        <dbReference type="EC" id="5.4.2.10"/>
    </reaction>
</comment>
<comment type="cofactor">
    <cofactor evidence="1">
        <name>Mg(2+)</name>
        <dbReference type="ChEBI" id="CHEBI:18420"/>
    </cofactor>
    <text evidence="1">Binds 1 Mg(2+) ion per subunit.</text>
</comment>
<comment type="PTM">
    <text evidence="1">Activated by phosphorylation.</text>
</comment>
<comment type="similarity">
    <text evidence="1">Belongs to the phosphohexose mutase family.</text>
</comment>
<keyword id="KW-0413">Isomerase</keyword>
<keyword id="KW-0460">Magnesium</keyword>
<keyword id="KW-0479">Metal-binding</keyword>
<keyword id="KW-0597">Phosphoprotein</keyword>
<keyword id="KW-1185">Reference proteome</keyword>
<name>GLMM_AGRFC</name>
<feature type="chain" id="PRO_0000147835" description="Phosphoglucosamine mutase">
    <location>
        <begin position="1"/>
        <end position="450"/>
    </location>
</feature>
<feature type="active site" description="Phosphoserine intermediate" evidence="1">
    <location>
        <position position="102"/>
    </location>
</feature>
<feature type="binding site" description="via phosphate group" evidence="1">
    <location>
        <position position="102"/>
    </location>
    <ligand>
        <name>Mg(2+)</name>
        <dbReference type="ChEBI" id="CHEBI:18420"/>
    </ligand>
</feature>
<feature type="binding site" evidence="1">
    <location>
        <position position="243"/>
    </location>
    <ligand>
        <name>Mg(2+)</name>
        <dbReference type="ChEBI" id="CHEBI:18420"/>
    </ligand>
</feature>
<feature type="binding site" evidence="1">
    <location>
        <position position="245"/>
    </location>
    <ligand>
        <name>Mg(2+)</name>
        <dbReference type="ChEBI" id="CHEBI:18420"/>
    </ligand>
</feature>
<feature type="binding site" evidence="1">
    <location>
        <position position="247"/>
    </location>
    <ligand>
        <name>Mg(2+)</name>
        <dbReference type="ChEBI" id="CHEBI:18420"/>
    </ligand>
</feature>
<feature type="modified residue" description="Phosphoserine" evidence="1">
    <location>
        <position position="102"/>
    </location>
</feature>
<evidence type="ECO:0000255" key="1">
    <source>
        <dbReference type="HAMAP-Rule" id="MF_01554"/>
    </source>
</evidence>
<accession>Q8U9L9</accession>
<accession>Q7CT49</accession>
<protein>
    <recommendedName>
        <fullName evidence="1">Phosphoglucosamine mutase</fullName>
        <ecNumber evidence="1">5.4.2.10</ecNumber>
    </recommendedName>
</protein>